<name>VATE_CLOD6</name>
<comment type="function">
    <text evidence="1">Produces ATP from ADP in the presence of a proton gradient across the membrane.</text>
</comment>
<comment type="similarity">
    <text evidence="1">Belongs to the V-ATPase E subunit family.</text>
</comment>
<sequence length="187" mass="21111">MGNEQKMIDRIIADAKQEAQEILDKAKSEADLKVNSANEKAEKEMASYTKLAEAEAEKAASKEISGAYMEAKKQILSKKQEILEEVILEAKNKLLNLKDNEYEEIILNMIEKSNCTDDSEIVLSKKDKKTLKDVLSKKGIKVSDETRDITGGFIVKKGDIEYNYSFEAIIAVEHEYIEQIAAEILFN</sequence>
<accession>Q184F0</accession>
<evidence type="ECO:0000255" key="1">
    <source>
        <dbReference type="HAMAP-Rule" id="MF_00311"/>
    </source>
</evidence>
<feature type="chain" id="PRO_0000322514" description="V-type ATP synthase subunit E">
    <location>
        <begin position="1"/>
        <end position="187"/>
    </location>
</feature>
<dbReference type="EMBL" id="AM180355">
    <property type="protein sequence ID" value="CAJ69851.1"/>
    <property type="molecule type" value="Genomic_DNA"/>
</dbReference>
<dbReference type="RefSeq" id="WP_003422659.1">
    <property type="nucleotide sequence ID" value="NZ_JAUPES010000017.1"/>
</dbReference>
<dbReference type="RefSeq" id="YP_001089475.1">
    <property type="nucleotide sequence ID" value="NC_009089.1"/>
</dbReference>
<dbReference type="SMR" id="Q184F0"/>
<dbReference type="STRING" id="272563.CD630_29580"/>
<dbReference type="EnsemblBacteria" id="CAJ69851">
    <property type="protein sequence ID" value="CAJ69851"/>
    <property type="gene ID" value="CD630_29580"/>
</dbReference>
<dbReference type="KEGG" id="cdf:CD630_29580"/>
<dbReference type="KEGG" id="pdc:CDIF630_03242"/>
<dbReference type="PATRIC" id="fig|272563.120.peg.3125"/>
<dbReference type="eggNOG" id="COG1390">
    <property type="taxonomic scope" value="Bacteria"/>
</dbReference>
<dbReference type="OrthoDB" id="1734087at2"/>
<dbReference type="PhylomeDB" id="Q184F0"/>
<dbReference type="BioCyc" id="PDIF272563:G12WB-3123-MONOMER"/>
<dbReference type="Proteomes" id="UP000001978">
    <property type="component" value="Chromosome"/>
</dbReference>
<dbReference type="GO" id="GO:0033178">
    <property type="term" value="C:proton-transporting two-sector ATPase complex, catalytic domain"/>
    <property type="evidence" value="ECO:0007669"/>
    <property type="project" value="InterPro"/>
</dbReference>
<dbReference type="GO" id="GO:0005524">
    <property type="term" value="F:ATP binding"/>
    <property type="evidence" value="ECO:0007669"/>
    <property type="project" value="UniProtKB-UniRule"/>
</dbReference>
<dbReference type="GO" id="GO:0046933">
    <property type="term" value="F:proton-transporting ATP synthase activity, rotational mechanism"/>
    <property type="evidence" value="ECO:0007669"/>
    <property type="project" value="UniProtKB-UniRule"/>
</dbReference>
<dbReference type="GO" id="GO:0046961">
    <property type="term" value="F:proton-transporting ATPase activity, rotational mechanism"/>
    <property type="evidence" value="ECO:0007669"/>
    <property type="project" value="InterPro"/>
</dbReference>
<dbReference type="GO" id="GO:0042777">
    <property type="term" value="P:proton motive force-driven plasma membrane ATP synthesis"/>
    <property type="evidence" value="ECO:0007669"/>
    <property type="project" value="UniProtKB-UniRule"/>
</dbReference>
<dbReference type="Gene3D" id="3.30.2320.30">
    <property type="entry name" value="ATP synthase, E subunit, C-terminal"/>
    <property type="match status" value="1"/>
</dbReference>
<dbReference type="Gene3D" id="1.20.5.620">
    <property type="entry name" value="F1F0 ATP synthase subunit B, membrane domain"/>
    <property type="match status" value="1"/>
</dbReference>
<dbReference type="HAMAP" id="MF_00311">
    <property type="entry name" value="ATP_synth_E_arch"/>
    <property type="match status" value="1"/>
</dbReference>
<dbReference type="InterPro" id="IPR038495">
    <property type="entry name" value="ATPase_E_C"/>
</dbReference>
<dbReference type="InterPro" id="IPR002842">
    <property type="entry name" value="ATPase_V1_Esu"/>
</dbReference>
<dbReference type="Pfam" id="PF01991">
    <property type="entry name" value="vATP-synt_E"/>
    <property type="match status" value="1"/>
</dbReference>
<dbReference type="SUPFAM" id="SSF160527">
    <property type="entry name" value="V-type ATPase subunit E-like"/>
    <property type="match status" value="1"/>
</dbReference>
<gene>
    <name evidence="1" type="primary">atpE</name>
    <name type="ordered locus">CD630_29580</name>
</gene>
<reference key="1">
    <citation type="journal article" date="2006" name="Nat. Genet.">
        <title>The multidrug-resistant human pathogen Clostridium difficile has a highly mobile, mosaic genome.</title>
        <authorList>
            <person name="Sebaihia M."/>
            <person name="Wren B.W."/>
            <person name="Mullany P."/>
            <person name="Fairweather N.F."/>
            <person name="Minton N."/>
            <person name="Stabler R."/>
            <person name="Thomson N.R."/>
            <person name="Roberts A.P."/>
            <person name="Cerdeno-Tarraga A.M."/>
            <person name="Wang H."/>
            <person name="Holden M.T.G."/>
            <person name="Wright A."/>
            <person name="Churcher C."/>
            <person name="Quail M.A."/>
            <person name="Baker S."/>
            <person name="Bason N."/>
            <person name="Brooks K."/>
            <person name="Chillingworth T."/>
            <person name="Cronin A."/>
            <person name="Davis P."/>
            <person name="Dowd L."/>
            <person name="Fraser A."/>
            <person name="Feltwell T."/>
            <person name="Hance Z."/>
            <person name="Holroyd S."/>
            <person name="Jagels K."/>
            <person name="Moule S."/>
            <person name="Mungall K."/>
            <person name="Price C."/>
            <person name="Rabbinowitsch E."/>
            <person name="Sharp S."/>
            <person name="Simmonds M."/>
            <person name="Stevens K."/>
            <person name="Unwin L."/>
            <person name="Whithead S."/>
            <person name="Dupuy B."/>
            <person name="Dougan G."/>
            <person name="Barrell B."/>
            <person name="Parkhill J."/>
        </authorList>
    </citation>
    <scope>NUCLEOTIDE SEQUENCE [LARGE SCALE GENOMIC DNA]</scope>
    <source>
        <strain>630</strain>
    </source>
</reference>
<proteinExistence type="inferred from homology"/>
<organism>
    <name type="scientific">Clostridioides difficile (strain 630)</name>
    <name type="common">Peptoclostridium difficile</name>
    <dbReference type="NCBI Taxonomy" id="272563"/>
    <lineage>
        <taxon>Bacteria</taxon>
        <taxon>Bacillati</taxon>
        <taxon>Bacillota</taxon>
        <taxon>Clostridia</taxon>
        <taxon>Peptostreptococcales</taxon>
        <taxon>Peptostreptococcaceae</taxon>
        <taxon>Clostridioides</taxon>
    </lineage>
</organism>
<protein>
    <recommendedName>
        <fullName>V-type ATP synthase subunit E</fullName>
    </recommendedName>
    <alternativeName>
        <fullName evidence="1">V-ATPase subunit E</fullName>
    </alternativeName>
</protein>
<keyword id="KW-0066">ATP synthesis</keyword>
<keyword id="KW-0375">Hydrogen ion transport</keyword>
<keyword id="KW-0406">Ion transport</keyword>
<keyword id="KW-1185">Reference proteome</keyword>
<keyword id="KW-0813">Transport</keyword>